<comment type="function">
    <text evidence="1">Potassium channel subunit that does not form functional channels by itself. Modulates KCNB1 and KCNB2 channel activity by shifting the threshold for inactivation to more negative values and by slowing the rate of inactivation. Can down-regulate the channel activity of KCNB1, KCNB2, KCNC4 and KCND1, possibly by trapping them in intracellular membranes (By similarity).</text>
</comment>
<comment type="subunit">
    <text evidence="1">Heteromultimer with KCNB1 and KCNB2. Interacts with KCNC4 and KCND1 (By similarity).</text>
</comment>
<comment type="subcellular location">
    <subcellularLocation>
        <location evidence="1">Cell membrane</location>
        <topology evidence="1">Multi-pass membrane protein</topology>
    </subcellularLocation>
    <text evidence="1">Has to be associated with another potassium channel subunit to get inserted in the plasma membrane. Remains intracellular in the absence of KCNB2 (By similarity).</text>
</comment>
<comment type="domain">
    <text evidence="1">The segment S4 is probably the voltage-sensor and is characterized by a series of positively charged amino acids at every third position.</text>
</comment>
<comment type="similarity">
    <text evidence="4">Belongs to the potassium channel family. V (TC 1.A.1.2) subfamily. Kv8.1/KCNV1 sub-subfamily.</text>
</comment>
<feature type="chain" id="PRO_0000308353" description="Potassium voltage-gated channel subfamily V member 1">
    <location>
        <begin position="1"/>
        <end position="503"/>
    </location>
</feature>
<feature type="topological domain" description="Cytoplasmic" evidence="2">
    <location>
        <begin position="3"/>
        <end position="213"/>
    </location>
</feature>
<feature type="transmembrane region" description="Helical; Name=Segment S1" evidence="2">
    <location>
        <begin position="214"/>
        <end position="234"/>
    </location>
</feature>
<feature type="topological domain" description="Extracellular" evidence="2">
    <location>
        <begin position="235"/>
        <end position="241"/>
    </location>
</feature>
<feature type="transmembrane region" description="Helical; Name=Segment S2" evidence="2">
    <location>
        <begin position="242"/>
        <end position="262"/>
    </location>
</feature>
<feature type="topological domain" description="Cytoplasmic" evidence="2">
    <location>
        <begin position="263"/>
        <end position="279"/>
    </location>
</feature>
<feature type="transmembrane region" description="Helical; Name=Segment S3" evidence="2">
    <location>
        <begin position="280"/>
        <end position="300"/>
    </location>
</feature>
<feature type="topological domain" description="Extracellular" evidence="2">
    <location>
        <begin position="301"/>
        <end position="312"/>
    </location>
</feature>
<feature type="transmembrane region" description="Helical; Voltage-sensor; Name=Segment S4" evidence="2">
    <location>
        <begin position="313"/>
        <end position="334"/>
    </location>
</feature>
<feature type="topological domain" description="Cytoplasmic" evidence="2">
    <location>
        <begin position="335"/>
        <end position="348"/>
    </location>
</feature>
<feature type="transmembrane region" description="Helical; Name=Segment S5" evidence="2">
    <location>
        <begin position="349"/>
        <end position="369"/>
    </location>
</feature>
<feature type="transmembrane region" description="Helical; Name=Segment S6" evidence="2">
    <location>
        <begin position="410"/>
        <end position="430"/>
    </location>
</feature>
<feature type="topological domain" description="Cytoplasmic" evidence="2">
    <location>
        <begin position="431"/>
        <end position="503"/>
    </location>
</feature>
<feature type="region of interest" description="Disordered" evidence="3">
    <location>
        <begin position="1"/>
        <end position="20"/>
    </location>
</feature>
<feature type="region of interest" description="Disordered" evidence="3">
    <location>
        <begin position="171"/>
        <end position="192"/>
    </location>
</feature>
<feature type="short sequence motif" description="Selectivity filter" evidence="1">
    <location>
        <begin position="395"/>
        <end position="400"/>
    </location>
</feature>
<feature type="compositionally biased region" description="Low complexity" evidence="3">
    <location>
        <begin position="10"/>
        <end position="20"/>
    </location>
</feature>
<feature type="compositionally biased region" description="Basic and acidic residues" evidence="3">
    <location>
        <begin position="171"/>
        <end position="187"/>
    </location>
</feature>
<feature type="sequence conflict" description="In Ref. 1; BAC36198." evidence="4" ref="1">
    <original>R</original>
    <variation>A</variation>
    <location>
        <position position="52"/>
    </location>
</feature>
<feature type="sequence conflict" description="In Ref. 1; BAC36198." evidence="4" ref="1">
    <original>D</original>
    <variation>G</variation>
    <location>
        <position position="95"/>
    </location>
</feature>
<feature type="sequence conflict" description="In Ref. 1; BAC28581." evidence="4" ref="1">
    <original>H</original>
    <variation>R</variation>
    <location>
        <position position="272"/>
    </location>
</feature>
<feature type="sequence conflict" description="In Ref. 1; BAC30004." evidence="4" ref="1">
    <original>LRSLGMTITQCYEEVGLLLLFLSVGISIFSTIEY</original>
    <variation>IHISLVPFNFAFKIIFRYIGTEPPYILTHPPSIK</variation>
    <location>
        <begin position="335"/>
        <end position="368"/>
    </location>
</feature>
<feature type="sequence conflict" description="In Ref. 1; BAC36198." evidence="4" ref="1">
    <original>F</original>
    <variation>Y</variation>
    <location>
        <position position="413"/>
    </location>
</feature>
<feature type="sequence conflict" description="In Ref. 1; BAC36198." evidence="4" ref="1">
    <original>A</original>
    <variation>V</variation>
    <location>
        <position position="462"/>
    </location>
</feature>
<dbReference type="EMBL" id="AK012275">
    <property type="protein sequence ID" value="BAB28134.1"/>
    <property type="molecule type" value="mRNA"/>
</dbReference>
<dbReference type="EMBL" id="AK034091">
    <property type="protein sequence ID" value="BAC28581.1"/>
    <property type="molecule type" value="mRNA"/>
</dbReference>
<dbReference type="EMBL" id="AK038450">
    <property type="protein sequence ID" value="BAC30004.1"/>
    <property type="molecule type" value="mRNA"/>
</dbReference>
<dbReference type="EMBL" id="AK076120">
    <property type="protein sequence ID" value="BAC36198.1"/>
    <property type="molecule type" value="mRNA"/>
</dbReference>
<dbReference type="EMBL" id="AK139482">
    <property type="protein sequence ID" value="BAE24032.1"/>
    <property type="molecule type" value="mRNA"/>
</dbReference>
<dbReference type="EMBL" id="BC128477">
    <property type="protein sequence ID" value="AAI28478.1"/>
    <property type="molecule type" value="mRNA"/>
</dbReference>
<dbReference type="EMBL" id="BC128478">
    <property type="protein sequence ID" value="AAI28479.1"/>
    <property type="molecule type" value="mRNA"/>
</dbReference>
<dbReference type="CCDS" id="CCDS27459.1"/>
<dbReference type="RefSeq" id="NP_080476.2">
    <property type="nucleotide sequence ID" value="NM_026200.3"/>
</dbReference>
<dbReference type="RefSeq" id="XP_006521360.1">
    <property type="nucleotide sequence ID" value="XM_006521297.5"/>
</dbReference>
<dbReference type="SMR" id="Q8BZN2"/>
<dbReference type="BioGRID" id="212230">
    <property type="interactions" value="1"/>
</dbReference>
<dbReference type="FunCoup" id="Q8BZN2">
    <property type="interactions" value="17"/>
</dbReference>
<dbReference type="STRING" id="10090.ENSMUSP00000022967"/>
<dbReference type="PhosphoSitePlus" id="Q8BZN2"/>
<dbReference type="PaxDb" id="10090-ENSMUSP00000022967"/>
<dbReference type="PeptideAtlas" id="Q8BZN2"/>
<dbReference type="ProteomicsDB" id="263505"/>
<dbReference type="Antibodypedia" id="26632">
    <property type="antibodies" value="128 antibodies from 20 providers"/>
</dbReference>
<dbReference type="DNASU" id="67498"/>
<dbReference type="Ensembl" id="ENSMUST00000022967.7">
    <property type="protein sequence ID" value="ENSMUSP00000022967.6"/>
    <property type="gene ID" value="ENSMUSG00000022342.7"/>
</dbReference>
<dbReference type="GeneID" id="67498"/>
<dbReference type="KEGG" id="mmu:67498"/>
<dbReference type="UCSC" id="uc007vql.2">
    <property type="organism name" value="mouse"/>
</dbReference>
<dbReference type="AGR" id="MGI:1914748"/>
<dbReference type="CTD" id="27012"/>
<dbReference type="MGI" id="MGI:1914748">
    <property type="gene designation" value="Kcnv1"/>
</dbReference>
<dbReference type="VEuPathDB" id="HostDB:ENSMUSG00000022342"/>
<dbReference type="eggNOG" id="KOG3713">
    <property type="taxonomic scope" value="Eukaryota"/>
</dbReference>
<dbReference type="GeneTree" id="ENSGT00940000159740"/>
<dbReference type="HOGENOM" id="CLU_011722_4_1_1"/>
<dbReference type="InParanoid" id="Q8BZN2"/>
<dbReference type="OMA" id="SGGDEFW"/>
<dbReference type="OrthoDB" id="296522at2759"/>
<dbReference type="PhylomeDB" id="Q8BZN2"/>
<dbReference type="TreeFam" id="TF313103"/>
<dbReference type="Reactome" id="R-MMU-1296072">
    <property type="pathway name" value="Voltage gated Potassium channels"/>
</dbReference>
<dbReference type="BioGRID-ORCS" id="67498">
    <property type="hits" value="1 hit in 75 CRISPR screens"/>
</dbReference>
<dbReference type="PRO" id="PR:Q8BZN2"/>
<dbReference type="Proteomes" id="UP000000589">
    <property type="component" value="Chromosome 15"/>
</dbReference>
<dbReference type="RNAct" id="Q8BZN2">
    <property type="molecule type" value="protein"/>
</dbReference>
<dbReference type="Bgee" id="ENSMUSG00000022342">
    <property type="expression patterns" value="Expressed in lumbar dorsal root ganglion and 47 other cell types or tissues"/>
</dbReference>
<dbReference type="GO" id="GO:0045171">
    <property type="term" value="C:intercellular bridge"/>
    <property type="evidence" value="ECO:0007669"/>
    <property type="project" value="Ensembl"/>
</dbReference>
<dbReference type="GO" id="GO:0008076">
    <property type="term" value="C:voltage-gated potassium channel complex"/>
    <property type="evidence" value="ECO:0007669"/>
    <property type="project" value="InterPro"/>
</dbReference>
<dbReference type="GO" id="GO:0005249">
    <property type="term" value="F:voltage-gated potassium channel activity"/>
    <property type="evidence" value="ECO:0007669"/>
    <property type="project" value="InterPro"/>
</dbReference>
<dbReference type="GO" id="GO:0051260">
    <property type="term" value="P:protein homooligomerization"/>
    <property type="evidence" value="ECO:0007669"/>
    <property type="project" value="InterPro"/>
</dbReference>
<dbReference type="FunFam" id="1.10.287.70:FF:000005">
    <property type="entry name" value="potassium voltage-gated channel subfamily G member 1"/>
    <property type="match status" value="1"/>
</dbReference>
<dbReference type="FunFam" id="1.20.120.350:FF:000044">
    <property type="entry name" value="Potassium voltage-gated channel subfamily V member 1"/>
    <property type="match status" value="1"/>
</dbReference>
<dbReference type="FunFam" id="3.30.710.10:FF:000067">
    <property type="entry name" value="Potassium voltage-gated channel subfamily V member 1"/>
    <property type="match status" value="1"/>
</dbReference>
<dbReference type="Gene3D" id="1.10.287.70">
    <property type="match status" value="1"/>
</dbReference>
<dbReference type="Gene3D" id="3.30.710.10">
    <property type="entry name" value="Potassium Channel Kv1.1, Chain A"/>
    <property type="match status" value="1"/>
</dbReference>
<dbReference type="Gene3D" id="1.20.120.350">
    <property type="entry name" value="Voltage-gated potassium channels. Chain C"/>
    <property type="match status" value="1"/>
</dbReference>
<dbReference type="InterPro" id="IPR000210">
    <property type="entry name" value="BTB/POZ_dom"/>
</dbReference>
<dbReference type="InterPro" id="IPR005821">
    <property type="entry name" value="Ion_trans_dom"/>
</dbReference>
<dbReference type="InterPro" id="IPR003968">
    <property type="entry name" value="K_chnl_volt-dep_Kv"/>
</dbReference>
<dbReference type="InterPro" id="IPR003970">
    <property type="entry name" value="K_chnl_volt-dep_Kv8.1"/>
</dbReference>
<dbReference type="InterPro" id="IPR011333">
    <property type="entry name" value="SKP1/BTB/POZ_sf"/>
</dbReference>
<dbReference type="InterPro" id="IPR003131">
    <property type="entry name" value="T1-type_BTB"/>
</dbReference>
<dbReference type="InterPro" id="IPR028325">
    <property type="entry name" value="VG_K_chnl"/>
</dbReference>
<dbReference type="InterPro" id="IPR027359">
    <property type="entry name" value="Volt_channel_dom_sf"/>
</dbReference>
<dbReference type="PANTHER" id="PTHR11537:SF38">
    <property type="entry name" value="POTASSIUM VOLTAGE-GATED CHANNEL SUBFAMILY V MEMBER 1"/>
    <property type="match status" value="1"/>
</dbReference>
<dbReference type="PANTHER" id="PTHR11537">
    <property type="entry name" value="VOLTAGE-GATED POTASSIUM CHANNEL"/>
    <property type="match status" value="1"/>
</dbReference>
<dbReference type="Pfam" id="PF02214">
    <property type="entry name" value="BTB_2"/>
    <property type="match status" value="1"/>
</dbReference>
<dbReference type="Pfam" id="PF00520">
    <property type="entry name" value="Ion_trans"/>
    <property type="match status" value="1"/>
</dbReference>
<dbReference type="PRINTS" id="PR00169">
    <property type="entry name" value="KCHANNEL"/>
</dbReference>
<dbReference type="PRINTS" id="PR01493">
    <property type="entry name" value="KV8CHANNEL"/>
</dbReference>
<dbReference type="PRINTS" id="PR01491">
    <property type="entry name" value="KVCHANNEL"/>
</dbReference>
<dbReference type="SMART" id="SM00225">
    <property type="entry name" value="BTB"/>
    <property type="match status" value="1"/>
</dbReference>
<dbReference type="SUPFAM" id="SSF54695">
    <property type="entry name" value="POZ domain"/>
    <property type="match status" value="1"/>
</dbReference>
<dbReference type="SUPFAM" id="SSF81324">
    <property type="entry name" value="Voltage-gated potassium channels"/>
    <property type="match status" value="1"/>
</dbReference>
<protein>
    <recommendedName>
        <fullName>Potassium voltage-gated channel subfamily V member 1</fullName>
    </recommendedName>
    <alternativeName>
        <fullName>Voltage-gated potassium channel subunit Kv8.1</fullName>
    </alternativeName>
</protein>
<keyword id="KW-1003">Cell membrane</keyword>
<keyword id="KW-0407">Ion channel</keyword>
<keyword id="KW-0406">Ion transport</keyword>
<keyword id="KW-0472">Membrane</keyword>
<keyword id="KW-0630">Potassium</keyword>
<keyword id="KW-0631">Potassium channel</keyword>
<keyword id="KW-0633">Potassium transport</keyword>
<keyword id="KW-1185">Reference proteome</keyword>
<keyword id="KW-0812">Transmembrane</keyword>
<keyword id="KW-1133">Transmembrane helix</keyword>
<keyword id="KW-0813">Transport</keyword>
<keyword id="KW-0851">Voltage-gated channel</keyword>
<proteinExistence type="evidence at transcript level"/>
<gene>
    <name type="primary">Kcnv1</name>
</gene>
<accession>Q8BZN2</accession>
<accession>Q8BK61</accession>
<accession>Q8BYS7</accession>
<accession>Q9CZR1</accession>
<organism>
    <name type="scientific">Mus musculus</name>
    <name type="common">Mouse</name>
    <dbReference type="NCBI Taxonomy" id="10090"/>
    <lineage>
        <taxon>Eukaryota</taxon>
        <taxon>Metazoa</taxon>
        <taxon>Chordata</taxon>
        <taxon>Craniata</taxon>
        <taxon>Vertebrata</taxon>
        <taxon>Euteleostomi</taxon>
        <taxon>Mammalia</taxon>
        <taxon>Eutheria</taxon>
        <taxon>Euarchontoglires</taxon>
        <taxon>Glires</taxon>
        <taxon>Rodentia</taxon>
        <taxon>Myomorpha</taxon>
        <taxon>Muroidea</taxon>
        <taxon>Muridae</taxon>
        <taxon>Murinae</taxon>
        <taxon>Mus</taxon>
        <taxon>Mus</taxon>
    </lineage>
</organism>
<sequence>MDLSPRNRPLLDSSSLDSGSLTSLDSSVFCSEGEGEPLALGDCFTVNVGGSRFVLSQQALSCFPHTRLGKLAVVVASYRRLGALAAAPSPLELCDDANPVDNEYFFDRSSQAFRYVLHYYRTGRLHVMEQLCALSFLQEIQYWGIDELSIDSCCRDRYFRRKELSETLDFKKDTDDQESQHESEQDFSKGPCPTVRQKLWDILEKPGSSTAARIFGVISIIFVAVSIVNMALMSAELSWLNLQLLEILEYVCISWFTGEFVLRFLCVKDRCHFLRKVPNIIDLLAILPFYITLLVESLSGSHTTQELENVGRLVQVLRLLRALRMLKLGRHSTGLRSLGMTITQCYEEVGLLLLFLSVGISIFSTIEYFAEQSIPDTTFTSVPCAWWWATTSMTTVGYGDIRPDTTTGKIVAFMCILSGILVLALPIAIINDRFSACYFTLKLKEAAVRQREALKKLTKNIATDSYISVNLRDVYARSIMEMLRLKGRERASTRSSGGDDFWF</sequence>
<name>KCNV1_MOUSE</name>
<reference key="1">
    <citation type="journal article" date="2005" name="Science">
        <title>The transcriptional landscape of the mammalian genome.</title>
        <authorList>
            <person name="Carninci P."/>
            <person name="Kasukawa T."/>
            <person name="Katayama S."/>
            <person name="Gough J."/>
            <person name="Frith M.C."/>
            <person name="Maeda N."/>
            <person name="Oyama R."/>
            <person name="Ravasi T."/>
            <person name="Lenhard B."/>
            <person name="Wells C."/>
            <person name="Kodzius R."/>
            <person name="Shimokawa K."/>
            <person name="Bajic V.B."/>
            <person name="Brenner S.E."/>
            <person name="Batalov S."/>
            <person name="Forrest A.R."/>
            <person name="Zavolan M."/>
            <person name="Davis M.J."/>
            <person name="Wilming L.G."/>
            <person name="Aidinis V."/>
            <person name="Allen J.E."/>
            <person name="Ambesi-Impiombato A."/>
            <person name="Apweiler R."/>
            <person name="Aturaliya R.N."/>
            <person name="Bailey T.L."/>
            <person name="Bansal M."/>
            <person name="Baxter L."/>
            <person name="Beisel K.W."/>
            <person name="Bersano T."/>
            <person name="Bono H."/>
            <person name="Chalk A.M."/>
            <person name="Chiu K.P."/>
            <person name="Choudhary V."/>
            <person name="Christoffels A."/>
            <person name="Clutterbuck D.R."/>
            <person name="Crowe M.L."/>
            <person name="Dalla E."/>
            <person name="Dalrymple B.P."/>
            <person name="de Bono B."/>
            <person name="Della Gatta G."/>
            <person name="di Bernardo D."/>
            <person name="Down T."/>
            <person name="Engstrom P."/>
            <person name="Fagiolini M."/>
            <person name="Faulkner G."/>
            <person name="Fletcher C.F."/>
            <person name="Fukushima T."/>
            <person name="Furuno M."/>
            <person name="Futaki S."/>
            <person name="Gariboldi M."/>
            <person name="Georgii-Hemming P."/>
            <person name="Gingeras T.R."/>
            <person name="Gojobori T."/>
            <person name="Green R.E."/>
            <person name="Gustincich S."/>
            <person name="Harbers M."/>
            <person name="Hayashi Y."/>
            <person name="Hensch T.K."/>
            <person name="Hirokawa N."/>
            <person name="Hill D."/>
            <person name="Huminiecki L."/>
            <person name="Iacono M."/>
            <person name="Ikeo K."/>
            <person name="Iwama A."/>
            <person name="Ishikawa T."/>
            <person name="Jakt M."/>
            <person name="Kanapin A."/>
            <person name="Katoh M."/>
            <person name="Kawasawa Y."/>
            <person name="Kelso J."/>
            <person name="Kitamura H."/>
            <person name="Kitano H."/>
            <person name="Kollias G."/>
            <person name="Krishnan S.P."/>
            <person name="Kruger A."/>
            <person name="Kummerfeld S.K."/>
            <person name="Kurochkin I.V."/>
            <person name="Lareau L.F."/>
            <person name="Lazarevic D."/>
            <person name="Lipovich L."/>
            <person name="Liu J."/>
            <person name="Liuni S."/>
            <person name="McWilliam S."/>
            <person name="Madan Babu M."/>
            <person name="Madera M."/>
            <person name="Marchionni L."/>
            <person name="Matsuda H."/>
            <person name="Matsuzawa S."/>
            <person name="Miki H."/>
            <person name="Mignone F."/>
            <person name="Miyake S."/>
            <person name="Morris K."/>
            <person name="Mottagui-Tabar S."/>
            <person name="Mulder N."/>
            <person name="Nakano N."/>
            <person name="Nakauchi H."/>
            <person name="Ng P."/>
            <person name="Nilsson R."/>
            <person name="Nishiguchi S."/>
            <person name="Nishikawa S."/>
            <person name="Nori F."/>
            <person name="Ohara O."/>
            <person name="Okazaki Y."/>
            <person name="Orlando V."/>
            <person name="Pang K.C."/>
            <person name="Pavan W.J."/>
            <person name="Pavesi G."/>
            <person name="Pesole G."/>
            <person name="Petrovsky N."/>
            <person name="Piazza S."/>
            <person name="Reed J."/>
            <person name="Reid J.F."/>
            <person name="Ring B.Z."/>
            <person name="Ringwald M."/>
            <person name="Rost B."/>
            <person name="Ruan Y."/>
            <person name="Salzberg S.L."/>
            <person name="Sandelin A."/>
            <person name="Schneider C."/>
            <person name="Schoenbach C."/>
            <person name="Sekiguchi K."/>
            <person name="Semple C.A."/>
            <person name="Seno S."/>
            <person name="Sessa L."/>
            <person name="Sheng Y."/>
            <person name="Shibata Y."/>
            <person name="Shimada H."/>
            <person name="Shimada K."/>
            <person name="Silva D."/>
            <person name="Sinclair B."/>
            <person name="Sperling S."/>
            <person name="Stupka E."/>
            <person name="Sugiura K."/>
            <person name="Sultana R."/>
            <person name="Takenaka Y."/>
            <person name="Taki K."/>
            <person name="Tammoja K."/>
            <person name="Tan S.L."/>
            <person name="Tang S."/>
            <person name="Taylor M.S."/>
            <person name="Tegner J."/>
            <person name="Teichmann S.A."/>
            <person name="Ueda H.R."/>
            <person name="van Nimwegen E."/>
            <person name="Verardo R."/>
            <person name="Wei C.L."/>
            <person name="Yagi K."/>
            <person name="Yamanishi H."/>
            <person name="Zabarovsky E."/>
            <person name="Zhu S."/>
            <person name="Zimmer A."/>
            <person name="Hide W."/>
            <person name="Bult C."/>
            <person name="Grimmond S.M."/>
            <person name="Teasdale R.D."/>
            <person name="Liu E.T."/>
            <person name="Brusic V."/>
            <person name="Quackenbush J."/>
            <person name="Wahlestedt C."/>
            <person name="Mattick J.S."/>
            <person name="Hume D.A."/>
            <person name="Kai C."/>
            <person name="Sasaki D."/>
            <person name="Tomaru Y."/>
            <person name="Fukuda S."/>
            <person name="Kanamori-Katayama M."/>
            <person name="Suzuki M."/>
            <person name="Aoki J."/>
            <person name="Arakawa T."/>
            <person name="Iida J."/>
            <person name="Imamura K."/>
            <person name="Itoh M."/>
            <person name="Kato T."/>
            <person name="Kawaji H."/>
            <person name="Kawagashira N."/>
            <person name="Kawashima T."/>
            <person name="Kojima M."/>
            <person name="Kondo S."/>
            <person name="Konno H."/>
            <person name="Nakano K."/>
            <person name="Ninomiya N."/>
            <person name="Nishio T."/>
            <person name="Okada M."/>
            <person name="Plessy C."/>
            <person name="Shibata K."/>
            <person name="Shiraki T."/>
            <person name="Suzuki S."/>
            <person name="Tagami M."/>
            <person name="Waki K."/>
            <person name="Watahiki A."/>
            <person name="Okamura-Oho Y."/>
            <person name="Suzuki H."/>
            <person name="Kawai J."/>
            <person name="Hayashizaki Y."/>
        </authorList>
    </citation>
    <scope>NUCLEOTIDE SEQUENCE [LARGE SCALE MRNA]</scope>
    <source>
        <strain>C57BL/6J</strain>
        <tissue>Brain cortex</tissue>
        <tissue>Diencephalon</tissue>
        <tissue>Embryo</tissue>
        <tissue>Hypothalamus</tissue>
    </source>
</reference>
<reference key="2">
    <citation type="journal article" date="2004" name="Genome Res.">
        <title>The status, quality, and expansion of the NIH full-length cDNA project: the Mammalian Gene Collection (MGC).</title>
        <authorList>
            <consortium name="The MGC Project Team"/>
        </authorList>
    </citation>
    <scope>NUCLEOTIDE SEQUENCE [LARGE SCALE MRNA]</scope>
</reference>
<evidence type="ECO:0000250" key="1"/>
<evidence type="ECO:0000255" key="2"/>
<evidence type="ECO:0000256" key="3">
    <source>
        <dbReference type="SAM" id="MobiDB-lite"/>
    </source>
</evidence>
<evidence type="ECO:0000305" key="4"/>